<keyword id="KW-0158">Chromosome</keyword>
<keyword id="KW-0238">DNA-binding</keyword>
<keyword id="KW-1017">Isopeptide bond</keyword>
<keyword id="KW-0488">Methylation</keyword>
<keyword id="KW-0496">Mitochondrion</keyword>
<keyword id="KW-0507">mRNA processing</keyword>
<keyword id="KW-0508">mRNA splicing</keyword>
<keyword id="KW-0539">Nucleus</keyword>
<keyword id="KW-0597">Phosphoprotein</keyword>
<keyword id="KW-1185">Reference proteome</keyword>
<keyword id="KW-0677">Repeat</keyword>
<keyword id="KW-0678">Repressor</keyword>
<keyword id="KW-0694">RNA-binding</keyword>
<keyword id="KW-0804">Transcription</keyword>
<keyword id="KW-0805">Transcription regulation</keyword>
<keyword id="KW-0832">Ubl conjugation</keyword>
<organism>
    <name type="scientific">Pongo abelii</name>
    <name type="common">Sumatran orangutan</name>
    <name type="synonym">Pongo pygmaeus abelii</name>
    <dbReference type="NCBI Taxonomy" id="9601"/>
    <lineage>
        <taxon>Eukaryota</taxon>
        <taxon>Metazoa</taxon>
        <taxon>Chordata</taxon>
        <taxon>Craniata</taxon>
        <taxon>Vertebrata</taxon>
        <taxon>Euteleostomi</taxon>
        <taxon>Mammalia</taxon>
        <taxon>Eutheria</taxon>
        <taxon>Euarchontoglires</taxon>
        <taxon>Primates</taxon>
        <taxon>Haplorrhini</taxon>
        <taxon>Catarrhini</taxon>
        <taxon>Hominidae</taxon>
        <taxon>Pongo</taxon>
    </lineage>
</organism>
<proteinExistence type="evidence at transcript level"/>
<dbReference type="EMBL" id="CR860740">
    <property type="protein sequence ID" value="CAH92854.1"/>
    <property type="molecule type" value="mRNA"/>
</dbReference>
<dbReference type="RefSeq" id="NP_001127597.1">
    <property type="nucleotide sequence ID" value="NM_001134125.1"/>
</dbReference>
<dbReference type="BMRB" id="Q5R5W2"/>
<dbReference type="SMR" id="Q5R5W2"/>
<dbReference type="STRING" id="9601.ENSPPYP00000002194"/>
<dbReference type="GeneID" id="100174676"/>
<dbReference type="KEGG" id="pon:100174676"/>
<dbReference type="CTD" id="23435"/>
<dbReference type="eggNOG" id="ENOG502QPQ8">
    <property type="taxonomic scope" value="Eukaryota"/>
</dbReference>
<dbReference type="InParanoid" id="Q5R5W2"/>
<dbReference type="OrthoDB" id="2020831at2759"/>
<dbReference type="Proteomes" id="UP000001595">
    <property type="component" value="Unplaced"/>
</dbReference>
<dbReference type="GO" id="GO:0000785">
    <property type="term" value="C:chromatin"/>
    <property type="evidence" value="ECO:0007669"/>
    <property type="project" value="TreeGrafter"/>
</dbReference>
<dbReference type="GO" id="GO:0005739">
    <property type="term" value="C:mitochondrion"/>
    <property type="evidence" value="ECO:0007669"/>
    <property type="project" value="UniProtKB-SubCell"/>
</dbReference>
<dbReference type="GO" id="GO:0016607">
    <property type="term" value="C:nuclear speck"/>
    <property type="evidence" value="ECO:0007669"/>
    <property type="project" value="UniProtKB-SubCell"/>
</dbReference>
<dbReference type="GO" id="GO:0005730">
    <property type="term" value="C:nucleolus"/>
    <property type="evidence" value="ECO:0007669"/>
    <property type="project" value="UniProtKB-SubCell"/>
</dbReference>
<dbReference type="GO" id="GO:0003677">
    <property type="term" value="F:DNA binding"/>
    <property type="evidence" value="ECO:0007669"/>
    <property type="project" value="UniProtKB-KW"/>
</dbReference>
<dbReference type="GO" id="GO:0003723">
    <property type="term" value="F:RNA binding"/>
    <property type="evidence" value="ECO:0007669"/>
    <property type="project" value="UniProtKB-KW"/>
</dbReference>
<dbReference type="GO" id="GO:0006397">
    <property type="term" value="P:mRNA processing"/>
    <property type="evidence" value="ECO:0007669"/>
    <property type="project" value="UniProtKB-KW"/>
</dbReference>
<dbReference type="GO" id="GO:0042752">
    <property type="term" value="P:regulation of circadian rhythm"/>
    <property type="evidence" value="ECO:0000250"/>
    <property type="project" value="UniProtKB"/>
</dbReference>
<dbReference type="GO" id="GO:0010468">
    <property type="term" value="P:regulation of gene expression"/>
    <property type="evidence" value="ECO:0007669"/>
    <property type="project" value="TreeGrafter"/>
</dbReference>
<dbReference type="GO" id="GO:0031647">
    <property type="term" value="P:regulation of protein stability"/>
    <property type="evidence" value="ECO:0000250"/>
    <property type="project" value="UniProtKB"/>
</dbReference>
<dbReference type="GO" id="GO:0008380">
    <property type="term" value="P:RNA splicing"/>
    <property type="evidence" value="ECO:0007669"/>
    <property type="project" value="UniProtKB-KW"/>
</dbReference>
<dbReference type="CDD" id="cd19609">
    <property type="entry name" value="NTD_TDP-43"/>
    <property type="match status" value="1"/>
</dbReference>
<dbReference type="CDD" id="cd12321">
    <property type="entry name" value="RRM1_TDP43"/>
    <property type="match status" value="1"/>
</dbReference>
<dbReference type="CDD" id="cd12322">
    <property type="entry name" value="RRM2_TDP43"/>
    <property type="match status" value="1"/>
</dbReference>
<dbReference type="FunFam" id="3.30.70.330:FF:000098">
    <property type="entry name" value="TAR DNA-binding protein 43"/>
    <property type="match status" value="1"/>
</dbReference>
<dbReference type="FunFam" id="3.30.70.330:FF:000107">
    <property type="entry name" value="TAR DNA-binding protein 43"/>
    <property type="match status" value="1"/>
</dbReference>
<dbReference type="Gene3D" id="3.30.70.330">
    <property type="match status" value="2"/>
</dbReference>
<dbReference type="InterPro" id="IPR012677">
    <property type="entry name" value="Nucleotide-bd_a/b_plait_sf"/>
</dbReference>
<dbReference type="InterPro" id="IPR035979">
    <property type="entry name" value="RBD_domain_sf"/>
</dbReference>
<dbReference type="InterPro" id="IPR000504">
    <property type="entry name" value="RRM_dom"/>
</dbReference>
<dbReference type="InterPro" id="IPR049124">
    <property type="entry name" value="TDP-43_C"/>
</dbReference>
<dbReference type="InterPro" id="IPR041105">
    <property type="entry name" value="TDP-43_N"/>
</dbReference>
<dbReference type="PANTHER" id="PTHR48033">
    <property type="entry name" value="RNA-BINDING (RRM/RBD/RNP MOTIFS) FAMILY PROTEIN"/>
    <property type="match status" value="1"/>
</dbReference>
<dbReference type="PANTHER" id="PTHR48033:SF9">
    <property type="entry name" value="TAR DNA-BINDING PROTEIN 43"/>
    <property type="match status" value="1"/>
</dbReference>
<dbReference type="Pfam" id="PF00076">
    <property type="entry name" value="RRM_1"/>
    <property type="match status" value="2"/>
</dbReference>
<dbReference type="Pfam" id="PF20910">
    <property type="entry name" value="TDP-43_C"/>
    <property type="match status" value="1"/>
</dbReference>
<dbReference type="Pfam" id="PF18694">
    <property type="entry name" value="TDP-43_N"/>
    <property type="match status" value="1"/>
</dbReference>
<dbReference type="SMART" id="SM00360">
    <property type="entry name" value="RRM"/>
    <property type="match status" value="2"/>
</dbReference>
<dbReference type="SUPFAM" id="SSF54928">
    <property type="entry name" value="RNA-binding domain, RBD"/>
    <property type="match status" value="2"/>
</dbReference>
<dbReference type="PROSITE" id="PS50102">
    <property type="entry name" value="RRM"/>
    <property type="match status" value="2"/>
</dbReference>
<feature type="chain" id="PRO_0000317415" description="TAR DNA-binding protein 43">
    <location>
        <begin position="1"/>
        <end position="414"/>
    </location>
</feature>
<feature type="domain" description="RRM 1" evidence="6">
    <location>
        <begin position="104"/>
        <end position="200"/>
    </location>
</feature>
<feature type="domain" description="RRM 2" evidence="6">
    <location>
        <begin position="191"/>
        <end position="262"/>
    </location>
</feature>
<feature type="region of interest" description="Interaction with UBQLN2" evidence="2">
    <location>
        <begin position="216"/>
        <end position="414"/>
    </location>
</feature>
<feature type="region of interest" description="Disordered" evidence="7">
    <location>
        <begin position="261"/>
        <end position="303"/>
    </location>
</feature>
<feature type="region of interest" description="Disordered" evidence="7">
    <location>
        <begin position="341"/>
        <end position="373"/>
    </location>
</feature>
<feature type="compositionally biased region" description="Basic and acidic residues" evidence="7">
    <location>
        <begin position="261"/>
        <end position="274"/>
    </location>
</feature>
<feature type="compositionally biased region" description="Gly residues" evidence="7">
    <location>
        <begin position="275"/>
        <end position="303"/>
    </location>
</feature>
<feature type="compositionally biased region" description="Low complexity" evidence="7">
    <location>
        <begin position="342"/>
        <end position="358"/>
    </location>
</feature>
<feature type="modified residue" description="Phosphoserine" evidence="2">
    <location>
        <position position="183"/>
    </location>
</feature>
<feature type="modified residue" description="Phosphoserine" evidence="2">
    <location>
        <position position="292"/>
    </location>
</feature>
<feature type="modified residue" description="Omega-N-methylarginine" evidence="2">
    <location>
        <position position="293"/>
    </location>
</feature>
<feature type="cross-link" description="Glycyl lysine isopeptide (Lys-Gly) (interchain with G-Cter in SUMO2)" evidence="2">
    <location>
        <position position="79"/>
    </location>
</feature>
<feature type="cross-link" description="Glycyl lysine isopeptide (Lys-Gly) (interchain with G-Cter in SUMO2)" evidence="2">
    <location>
        <position position="84"/>
    </location>
</feature>
<feature type="cross-link" description="Glycyl lysine isopeptide (Lys-Gly) (interchain with G-Cter in SUMO2)" evidence="2">
    <location>
        <position position="95"/>
    </location>
</feature>
<feature type="cross-link" description="Glycyl lysine isopeptide (Lys-Gly) (interchain with G-Cter in SUMO2)" evidence="2">
    <location>
        <position position="102"/>
    </location>
</feature>
<feature type="cross-link" description="Glycyl lysine isopeptide (Lys-Gly) (interchain with G-Cter in SUMO2)" evidence="2">
    <location>
        <position position="181"/>
    </location>
</feature>
<feature type="cross-link" description="Glycyl lysine isopeptide (Lys-Gly) (interchain with G-Cter in SUMO2)" evidence="2">
    <location>
        <position position="263"/>
    </location>
</feature>
<reference key="1">
    <citation type="submission" date="2004-11" db="EMBL/GenBank/DDBJ databases">
        <authorList>
            <consortium name="The German cDNA consortium"/>
        </authorList>
    </citation>
    <scope>NUCLEOTIDE SEQUENCE [LARGE SCALE MRNA]</scope>
    <source>
        <tissue>Brain cortex</tissue>
    </source>
</reference>
<gene>
    <name type="primary">TARDBP</name>
    <name type="synonym">TDP43</name>
</gene>
<accession>Q5R5W2</accession>
<name>TADBP_PONAB</name>
<sequence length="414" mass="44713">MSEYIRVTEDESDEPIEIPSEDDGTVLLSTVTAQFPGACGLRYRNPVSQCMRGVRLVEGILHAPDAGWGNLVYVVNYPKDNKRKMDETDASSAVKVKRAVQKTSDLIVLGLPWKTTEQDLKEYFSTFGEVLMVQVKKDLKTGHSKGFGFVRFTEYETQVKVMSQRHMIDGRWCDCKLPNSKQSQDEPLRSRKVFVGRCTEDMTEDELREFFSQYGDVMDVFIPKPFRAFAFVTFADDQIAQSLCGEDLIIKGISVHISNAEPKHNSNRQLERSGRFGGNPGGFGNQGGFGNSRGGGAGLGNNQGSNMGGGMNFGAFSINPAMMAAAQAALQSSWGMMGMLASQQNQSGPSGNNQNQGNMQREPNQAFGSGNNSYSGSNSGAAIGWGSASNAGSGSGFNGGFGSSMDSKSSGWGM</sequence>
<evidence type="ECO:0000250" key="1"/>
<evidence type="ECO:0000250" key="2">
    <source>
        <dbReference type="UniProtKB" id="Q13148"/>
    </source>
</evidence>
<evidence type="ECO:0000250" key="3">
    <source>
        <dbReference type="UniProtKB" id="Q15233"/>
    </source>
</evidence>
<evidence type="ECO:0000250" key="4">
    <source>
        <dbReference type="UniProtKB" id="Q5FVM4"/>
    </source>
</evidence>
<evidence type="ECO:0000250" key="5">
    <source>
        <dbReference type="UniProtKB" id="Q99K48"/>
    </source>
</evidence>
<evidence type="ECO:0000255" key="6">
    <source>
        <dbReference type="PROSITE-ProRule" id="PRU00176"/>
    </source>
</evidence>
<evidence type="ECO:0000256" key="7">
    <source>
        <dbReference type="SAM" id="MobiDB-lite"/>
    </source>
</evidence>
<comment type="function">
    <text evidence="3 4 5">DNA- and RNA binding protein, involved in several nuclear processes (By similarity). Binds the conventional octamer sequence in double-stranded DNA (By similarity). Also binds single-stranded DNA and RNA at a site independent of the duplex site (By similarity). Involved in pre-mRNA splicing, probably as a heterodimer with SFPQ (By similarity). Interacts with U5 snRNA, probably by binding to a purine-rich sequence located on the 3' side of U5 snRNA stem 1b (By similarity). Together with PSPC1, required for the formation of nuclear paraspeckles (By similarity). The SFPQ-NONO heteromer associated with MATR3 may play a role in nuclear retention of defective RNAs (By similarity). The SFPQ-NONO heteromer may be involved in DNA unwinding by modulating the function of topoisomerase I/TOP1 (By similarity). The SFPQ-NONO heteromer may be involved in DNA non-homologous end joining (NHEJ) required for double-strand break repair and V(D)J recombination and may stabilize paired DNA ends (By similarity). In vitro, the complex strongly stimulates DNA end joining, binds directly to the DNA substrates and cooperates with the Ku70/G22P1-Ku80/XRCC5 (Ku) dimer to establish a functional preligation complex (By similarity). NONO is involved in transcriptional regulation (By similarity). The SFPQ-NONO-NR5A1 complex binds to the CYP17 promoter and regulates basal and cAMP-dependent transcriptional activity (By similarity). NONO binds to an enhancer element in long terminal repeats of endogenous intracisternal A particles (IAPs) and activates transcription (By similarity). Regulates the circadian clock by repressing the transcriptional activator activity of the CLOCK-BMAL1 heterodimer (By similarity). Important for the functional organization of GABAergic synapses (By similarity). Plays a specific and important role in the regulation of synaptic RNAs and GPHN/gephyrin scaffold structure, through the regulation of GABRA2 transcript (By similarity). Plays a key role during neuronal differentiation by recruiting TET1 to genomic loci and thereby regulating 5-hydroxymethylcytosine levels (By similarity). Plays a role in the regulation of DNA virus-mediated innate immune response by assembling into the HDP-RNP complex, a complex that serves as a platform for IRF3 phosphorylation and subsequent innate immune response activation through the cGAS-STING pathway (By similarity).</text>
</comment>
<comment type="subunit">
    <text evidence="3 4 5">Monomer and component of the SFPQ-NONO complex, which is probably a heterotetramer of two 52 kDa (NONO) and two 100 kDa (SFPQ) subunits. NONO is a component of spliceosome and U5.4/6 snRNP complexes (By similarity). Interacts with CPNE4 (via VWFA domain) (By similarity). Forms heterodimers with PSPC1; this involves formation of a coiled coil domain by helices from both proteins. Part of complex consisting of SFPQ, NONO and MATR3. Part of a complex consisting of SFPQ, NONO and NR5A1. Part of a complex consisting of SFPQ, NONO and TOP1. Interacts with SPI1. Interacts with RNF43 (By similarity). Interacts with PER1 and PER2 (By similarity). Part of the HDP-RNP complex composed of at least HEXIM1, PRKDC, XRCC5, XRCC6, paraspeckle proteins (SFPQ, NONO, PSPC1, RBM14, and MATR3) and NEAT1 RNA. Interacts (via second RRM domain) with WASL; the interaction is direct. Component of a multiprotein complex with WASL and SFPQ (By similarity). Interacts with ERCC6 (By similarity). Interacts (via DNA-binding domain) with TET1 (By similarity).</text>
</comment>
<comment type="subcellular location">
    <subcellularLocation>
        <location evidence="5">Nucleus</location>
    </subcellularLocation>
    <subcellularLocation>
        <location evidence="5">Nucleus</location>
        <location evidence="5">Nucleolus</location>
    </subcellularLocation>
    <subcellularLocation>
        <location evidence="5">Nucleus speckle</location>
    </subcellularLocation>
    <subcellularLocation>
        <location evidence="5">Chromosome</location>
    </subcellularLocation>
    <subcellularLocation>
        <location evidence="2">Mitochondrion</location>
    </subcellularLocation>
    <text evidence="2">Continuously travels in and out of the nucleus. Localizes to stress granules in response to oxidative stress. A small subset localizes in mitochondria.</text>
</comment>
<comment type="domain">
    <text evidence="1">The RRM domains can bind to both DNA and RNA.</text>
</comment>
<comment type="PTM">
    <text evidence="5">Hyperphosphorylated.</text>
</comment>
<comment type="PTM">
    <text evidence="5">Ubiquitinated.</text>
</comment>
<protein>
    <recommendedName>
        <fullName>TAR DNA-binding protein 43</fullName>
        <shortName>TDP-43</shortName>
    </recommendedName>
</protein>